<sequence length="388" mass="42683">MRYFTAGESHGPRLTAIIEGVPAGLSLSAEDINIELKRRQGGYGRGGRMKIESDQVEITSGVRHGKTIGSPITLNVTNRDFKNWEQIMAAQDVEDKIKKQRRLTKPRPGHADLVGGMKYEFEDLRNVLERSSARETTMRVAVGAVAKKLLHELEIEVANHVVNFGGREISSPEHLSVQEIRETAGRSDLSIFDESQAEDLRTYIDQIKKAGDTIGGIIETRVEGVPAGLGSYVQYDRKLDAKIAGAVVSINAFKGVEFGLGFEAGKRPGSQVMDEIIWSENKGYTRSSNQLGGFEGGMTNGEQLIVRGVMKPIPTLYKPLMSIDTESHEPYKASVERSDPTALPAAGVVMENVVATVVAQEICDKFNSDTINELKKALVDYKKRLSEY</sequence>
<reference key="1">
    <citation type="journal article" date="2007" name="J. Bacteriol.">
        <title>The complete genome sequence of the lactic acid bacterial paradigm Lactococcus lactis subsp. cremoris MG1363.</title>
        <authorList>
            <person name="Wegmann U."/>
            <person name="O'Connell-Motherway M."/>
            <person name="Zomer A."/>
            <person name="Buist G."/>
            <person name="Shearman C."/>
            <person name="Canchaya C."/>
            <person name="Ventura M."/>
            <person name="Goesmann A."/>
            <person name="Gasson M.J."/>
            <person name="Kuipers O.P."/>
            <person name="van Sinderen D."/>
            <person name="Kok J."/>
        </authorList>
    </citation>
    <scope>NUCLEOTIDE SEQUENCE [LARGE SCALE GENOMIC DNA]</scope>
    <source>
        <strain>MG1363</strain>
    </source>
</reference>
<comment type="function">
    <text evidence="1">Catalyzes the anti-1,4-elimination of the C-3 phosphate and the C-6 proR hydrogen from 5-enolpyruvylshikimate-3-phosphate (EPSP) to yield chorismate, which is the branch point compound that serves as the starting substrate for the three terminal pathways of aromatic amino acid biosynthesis. This reaction introduces a second double bond into the aromatic ring system.</text>
</comment>
<comment type="catalytic activity">
    <reaction evidence="1">
        <text>5-O-(1-carboxyvinyl)-3-phosphoshikimate = chorismate + phosphate</text>
        <dbReference type="Rhea" id="RHEA:21020"/>
        <dbReference type="ChEBI" id="CHEBI:29748"/>
        <dbReference type="ChEBI" id="CHEBI:43474"/>
        <dbReference type="ChEBI" id="CHEBI:57701"/>
        <dbReference type="EC" id="4.2.3.5"/>
    </reaction>
</comment>
<comment type="cofactor">
    <cofactor evidence="1">
        <name>FMNH2</name>
        <dbReference type="ChEBI" id="CHEBI:57618"/>
    </cofactor>
    <text evidence="1">Reduced FMN (FMNH(2)).</text>
</comment>
<comment type="pathway">
    <text evidence="1">Metabolic intermediate biosynthesis; chorismate biosynthesis; chorismate from D-erythrose 4-phosphate and phosphoenolpyruvate: step 7/7.</text>
</comment>
<comment type="subunit">
    <text evidence="1">Homotetramer.</text>
</comment>
<comment type="similarity">
    <text evidence="1">Belongs to the chorismate synthase family.</text>
</comment>
<protein>
    <recommendedName>
        <fullName evidence="1">Chorismate synthase</fullName>
        <shortName evidence="1">CS</shortName>
        <ecNumber evidence="1">4.2.3.5</ecNumber>
    </recommendedName>
    <alternativeName>
        <fullName evidence="1">5-enolpyruvylshikimate-3-phosphate phospholyase</fullName>
    </alternativeName>
</protein>
<keyword id="KW-0028">Amino-acid biosynthesis</keyword>
<keyword id="KW-0057">Aromatic amino acid biosynthesis</keyword>
<keyword id="KW-0274">FAD</keyword>
<keyword id="KW-0285">Flavoprotein</keyword>
<keyword id="KW-0288">FMN</keyword>
<keyword id="KW-0456">Lyase</keyword>
<keyword id="KW-0521">NADP</keyword>
<accession>A2RMH2</accession>
<feature type="chain" id="PRO_1000022503" description="Chorismate synthase">
    <location>
        <begin position="1"/>
        <end position="388"/>
    </location>
</feature>
<feature type="binding site" evidence="1">
    <location>
        <position position="39"/>
    </location>
    <ligand>
        <name>NADP(+)</name>
        <dbReference type="ChEBI" id="CHEBI:58349"/>
    </ligand>
</feature>
<feature type="binding site" evidence="1">
    <location>
        <position position="45"/>
    </location>
    <ligand>
        <name>NADP(+)</name>
        <dbReference type="ChEBI" id="CHEBI:58349"/>
    </ligand>
</feature>
<feature type="binding site" evidence="1">
    <location>
        <begin position="130"/>
        <end position="132"/>
    </location>
    <ligand>
        <name>FMN</name>
        <dbReference type="ChEBI" id="CHEBI:58210"/>
    </ligand>
</feature>
<feature type="binding site" evidence="1">
    <location>
        <begin position="251"/>
        <end position="252"/>
    </location>
    <ligand>
        <name>FMN</name>
        <dbReference type="ChEBI" id="CHEBI:58210"/>
    </ligand>
</feature>
<feature type="binding site" evidence="1">
    <location>
        <position position="296"/>
    </location>
    <ligand>
        <name>FMN</name>
        <dbReference type="ChEBI" id="CHEBI:58210"/>
    </ligand>
</feature>
<feature type="binding site" evidence="1">
    <location>
        <begin position="311"/>
        <end position="315"/>
    </location>
    <ligand>
        <name>FMN</name>
        <dbReference type="ChEBI" id="CHEBI:58210"/>
    </ligand>
</feature>
<feature type="binding site" evidence="1">
    <location>
        <position position="337"/>
    </location>
    <ligand>
        <name>FMN</name>
        <dbReference type="ChEBI" id="CHEBI:58210"/>
    </ligand>
</feature>
<evidence type="ECO:0000255" key="1">
    <source>
        <dbReference type="HAMAP-Rule" id="MF_00300"/>
    </source>
</evidence>
<gene>
    <name evidence="1" type="primary">aroC</name>
    <name type="ordered locus">llmg_1934</name>
</gene>
<dbReference type="EC" id="4.2.3.5" evidence="1"/>
<dbReference type="EMBL" id="AM406671">
    <property type="protein sequence ID" value="CAL98503.1"/>
    <property type="molecule type" value="Genomic_DNA"/>
</dbReference>
<dbReference type="RefSeq" id="WP_011835680.1">
    <property type="nucleotide sequence ID" value="NC_009004.1"/>
</dbReference>
<dbReference type="SMR" id="A2RMH2"/>
<dbReference type="STRING" id="416870.llmg_1934"/>
<dbReference type="KEGG" id="llm:llmg_1934"/>
<dbReference type="eggNOG" id="COG0082">
    <property type="taxonomic scope" value="Bacteria"/>
</dbReference>
<dbReference type="HOGENOM" id="CLU_034547_2_0_9"/>
<dbReference type="OrthoDB" id="9771806at2"/>
<dbReference type="PhylomeDB" id="A2RMH2"/>
<dbReference type="UniPathway" id="UPA00053">
    <property type="reaction ID" value="UER00090"/>
</dbReference>
<dbReference type="Proteomes" id="UP000000364">
    <property type="component" value="Chromosome"/>
</dbReference>
<dbReference type="GO" id="GO:0005829">
    <property type="term" value="C:cytosol"/>
    <property type="evidence" value="ECO:0007669"/>
    <property type="project" value="TreeGrafter"/>
</dbReference>
<dbReference type="GO" id="GO:0004107">
    <property type="term" value="F:chorismate synthase activity"/>
    <property type="evidence" value="ECO:0007669"/>
    <property type="project" value="UniProtKB-UniRule"/>
</dbReference>
<dbReference type="GO" id="GO:0010181">
    <property type="term" value="F:FMN binding"/>
    <property type="evidence" value="ECO:0007669"/>
    <property type="project" value="TreeGrafter"/>
</dbReference>
<dbReference type="GO" id="GO:0008652">
    <property type="term" value="P:amino acid biosynthetic process"/>
    <property type="evidence" value="ECO:0007669"/>
    <property type="project" value="UniProtKB-KW"/>
</dbReference>
<dbReference type="GO" id="GO:0009073">
    <property type="term" value="P:aromatic amino acid family biosynthetic process"/>
    <property type="evidence" value="ECO:0007669"/>
    <property type="project" value="UniProtKB-KW"/>
</dbReference>
<dbReference type="GO" id="GO:0009423">
    <property type="term" value="P:chorismate biosynthetic process"/>
    <property type="evidence" value="ECO:0007669"/>
    <property type="project" value="UniProtKB-UniRule"/>
</dbReference>
<dbReference type="CDD" id="cd07304">
    <property type="entry name" value="Chorismate_synthase"/>
    <property type="match status" value="1"/>
</dbReference>
<dbReference type="FunFam" id="3.60.150.10:FF:000002">
    <property type="entry name" value="Chorismate synthase"/>
    <property type="match status" value="1"/>
</dbReference>
<dbReference type="Gene3D" id="3.60.150.10">
    <property type="entry name" value="Chorismate synthase AroC"/>
    <property type="match status" value="1"/>
</dbReference>
<dbReference type="HAMAP" id="MF_00300">
    <property type="entry name" value="Chorismate_synth"/>
    <property type="match status" value="1"/>
</dbReference>
<dbReference type="InterPro" id="IPR000453">
    <property type="entry name" value="Chorismate_synth"/>
</dbReference>
<dbReference type="InterPro" id="IPR035904">
    <property type="entry name" value="Chorismate_synth_AroC_sf"/>
</dbReference>
<dbReference type="InterPro" id="IPR020541">
    <property type="entry name" value="Chorismate_synthase_CS"/>
</dbReference>
<dbReference type="NCBIfam" id="TIGR00033">
    <property type="entry name" value="aroC"/>
    <property type="match status" value="1"/>
</dbReference>
<dbReference type="NCBIfam" id="NF003793">
    <property type="entry name" value="PRK05382.1"/>
    <property type="match status" value="1"/>
</dbReference>
<dbReference type="PANTHER" id="PTHR21085">
    <property type="entry name" value="CHORISMATE SYNTHASE"/>
    <property type="match status" value="1"/>
</dbReference>
<dbReference type="PANTHER" id="PTHR21085:SF0">
    <property type="entry name" value="CHORISMATE SYNTHASE"/>
    <property type="match status" value="1"/>
</dbReference>
<dbReference type="Pfam" id="PF01264">
    <property type="entry name" value="Chorismate_synt"/>
    <property type="match status" value="1"/>
</dbReference>
<dbReference type="PIRSF" id="PIRSF001456">
    <property type="entry name" value="Chorismate_synth"/>
    <property type="match status" value="1"/>
</dbReference>
<dbReference type="SUPFAM" id="SSF103263">
    <property type="entry name" value="Chorismate synthase, AroC"/>
    <property type="match status" value="1"/>
</dbReference>
<dbReference type="PROSITE" id="PS00787">
    <property type="entry name" value="CHORISMATE_SYNTHASE_1"/>
    <property type="match status" value="1"/>
</dbReference>
<dbReference type="PROSITE" id="PS00788">
    <property type="entry name" value="CHORISMATE_SYNTHASE_2"/>
    <property type="match status" value="1"/>
</dbReference>
<dbReference type="PROSITE" id="PS00789">
    <property type="entry name" value="CHORISMATE_SYNTHASE_3"/>
    <property type="match status" value="1"/>
</dbReference>
<proteinExistence type="inferred from homology"/>
<name>AROC_LACLM</name>
<organism>
    <name type="scientific">Lactococcus lactis subsp. cremoris (strain MG1363)</name>
    <dbReference type="NCBI Taxonomy" id="416870"/>
    <lineage>
        <taxon>Bacteria</taxon>
        <taxon>Bacillati</taxon>
        <taxon>Bacillota</taxon>
        <taxon>Bacilli</taxon>
        <taxon>Lactobacillales</taxon>
        <taxon>Streptococcaceae</taxon>
        <taxon>Lactococcus</taxon>
        <taxon>Lactococcus cremoris subsp. cremoris</taxon>
    </lineage>
</organism>